<dbReference type="EC" id="7.4.2.8" evidence="1"/>
<dbReference type="EMBL" id="AE008923">
    <property type="protein sequence ID" value="AAM35676.1"/>
    <property type="molecule type" value="Genomic_DNA"/>
</dbReference>
<dbReference type="RefSeq" id="WP_005910880.1">
    <property type="nucleotide sequence ID" value="NC_003919.1"/>
</dbReference>
<dbReference type="SMR" id="Q8PPA0"/>
<dbReference type="GeneID" id="66909982"/>
<dbReference type="KEGG" id="xac:XAC0788"/>
<dbReference type="eggNOG" id="COG0653">
    <property type="taxonomic scope" value="Bacteria"/>
</dbReference>
<dbReference type="HOGENOM" id="CLU_005314_3_0_6"/>
<dbReference type="Proteomes" id="UP000000576">
    <property type="component" value="Chromosome"/>
</dbReference>
<dbReference type="GO" id="GO:0031522">
    <property type="term" value="C:cell envelope Sec protein transport complex"/>
    <property type="evidence" value="ECO:0007669"/>
    <property type="project" value="TreeGrafter"/>
</dbReference>
<dbReference type="GO" id="GO:0005829">
    <property type="term" value="C:cytosol"/>
    <property type="evidence" value="ECO:0007669"/>
    <property type="project" value="TreeGrafter"/>
</dbReference>
<dbReference type="GO" id="GO:0005886">
    <property type="term" value="C:plasma membrane"/>
    <property type="evidence" value="ECO:0007669"/>
    <property type="project" value="UniProtKB-SubCell"/>
</dbReference>
<dbReference type="GO" id="GO:0005524">
    <property type="term" value="F:ATP binding"/>
    <property type="evidence" value="ECO:0007669"/>
    <property type="project" value="UniProtKB-UniRule"/>
</dbReference>
<dbReference type="GO" id="GO:0046872">
    <property type="term" value="F:metal ion binding"/>
    <property type="evidence" value="ECO:0007669"/>
    <property type="project" value="UniProtKB-KW"/>
</dbReference>
<dbReference type="GO" id="GO:0008564">
    <property type="term" value="F:protein-exporting ATPase activity"/>
    <property type="evidence" value="ECO:0007669"/>
    <property type="project" value="UniProtKB-EC"/>
</dbReference>
<dbReference type="GO" id="GO:0065002">
    <property type="term" value="P:intracellular protein transmembrane transport"/>
    <property type="evidence" value="ECO:0007669"/>
    <property type="project" value="UniProtKB-UniRule"/>
</dbReference>
<dbReference type="GO" id="GO:0017038">
    <property type="term" value="P:protein import"/>
    <property type="evidence" value="ECO:0007669"/>
    <property type="project" value="InterPro"/>
</dbReference>
<dbReference type="GO" id="GO:0006605">
    <property type="term" value="P:protein targeting"/>
    <property type="evidence" value="ECO:0007669"/>
    <property type="project" value="UniProtKB-UniRule"/>
</dbReference>
<dbReference type="GO" id="GO:0043952">
    <property type="term" value="P:protein transport by the Sec complex"/>
    <property type="evidence" value="ECO:0007669"/>
    <property type="project" value="TreeGrafter"/>
</dbReference>
<dbReference type="CDD" id="cd17928">
    <property type="entry name" value="DEXDc_SecA"/>
    <property type="match status" value="1"/>
</dbReference>
<dbReference type="CDD" id="cd18803">
    <property type="entry name" value="SF2_C_secA"/>
    <property type="match status" value="1"/>
</dbReference>
<dbReference type="FunFam" id="3.40.50.300:FF:000081">
    <property type="entry name" value="Preprotein translocase subunit SecA"/>
    <property type="match status" value="1"/>
</dbReference>
<dbReference type="FunFam" id="3.40.50.300:FF:000113">
    <property type="entry name" value="Preprotein translocase subunit SecA"/>
    <property type="match status" value="1"/>
</dbReference>
<dbReference type="FunFam" id="3.90.1440.10:FF:000001">
    <property type="entry name" value="Preprotein translocase subunit SecA"/>
    <property type="match status" value="1"/>
</dbReference>
<dbReference type="FunFam" id="1.10.3060.10:FF:000003">
    <property type="entry name" value="Protein translocase subunit SecA"/>
    <property type="match status" value="1"/>
</dbReference>
<dbReference type="Gene3D" id="1.10.3060.10">
    <property type="entry name" value="Helical scaffold and wing domains of SecA"/>
    <property type="match status" value="1"/>
</dbReference>
<dbReference type="Gene3D" id="3.40.50.300">
    <property type="entry name" value="P-loop containing nucleotide triphosphate hydrolases"/>
    <property type="match status" value="2"/>
</dbReference>
<dbReference type="Gene3D" id="3.90.1440.10">
    <property type="entry name" value="SecA, preprotein cross-linking domain"/>
    <property type="match status" value="1"/>
</dbReference>
<dbReference type="HAMAP" id="MF_01382">
    <property type="entry name" value="SecA"/>
    <property type="match status" value="1"/>
</dbReference>
<dbReference type="InterPro" id="IPR014001">
    <property type="entry name" value="Helicase_ATP-bd"/>
</dbReference>
<dbReference type="InterPro" id="IPR001650">
    <property type="entry name" value="Helicase_C-like"/>
</dbReference>
<dbReference type="InterPro" id="IPR027417">
    <property type="entry name" value="P-loop_NTPase"/>
</dbReference>
<dbReference type="InterPro" id="IPR004027">
    <property type="entry name" value="SEC_C_motif"/>
</dbReference>
<dbReference type="InterPro" id="IPR000185">
    <property type="entry name" value="SecA"/>
</dbReference>
<dbReference type="InterPro" id="IPR020937">
    <property type="entry name" value="SecA_CS"/>
</dbReference>
<dbReference type="InterPro" id="IPR011115">
    <property type="entry name" value="SecA_DEAD"/>
</dbReference>
<dbReference type="InterPro" id="IPR014018">
    <property type="entry name" value="SecA_motor_DEAD"/>
</dbReference>
<dbReference type="InterPro" id="IPR011130">
    <property type="entry name" value="SecA_preprotein_X-link_dom"/>
</dbReference>
<dbReference type="InterPro" id="IPR044722">
    <property type="entry name" value="SecA_SF2_C"/>
</dbReference>
<dbReference type="InterPro" id="IPR011116">
    <property type="entry name" value="SecA_Wing/Scaffold"/>
</dbReference>
<dbReference type="InterPro" id="IPR036266">
    <property type="entry name" value="SecA_Wing/Scaffold_sf"/>
</dbReference>
<dbReference type="InterPro" id="IPR036670">
    <property type="entry name" value="SecA_X-link_sf"/>
</dbReference>
<dbReference type="NCBIfam" id="NF009538">
    <property type="entry name" value="PRK12904.1"/>
    <property type="match status" value="1"/>
</dbReference>
<dbReference type="NCBIfam" id="TIGR00963">
    <property type="entry name" value="secA"/>
    <property type="match status" value="1"/>
</dbReference>
<dbReference type="PANTHER" id="PTHR30612:SF0">
    <property type="entry name" value="CHLOROPLAST PROTEIN-TRANSPORTING ATPASE"/>
    <property type="match status" value="1"/>
</dbReference>
<dbReference type="PANTHER" id="PTHR30612">
    <property type="entry name" value="SECA INNER MEMBRANE COMPONENT OF SEC PROTEIN SECRETION SYSTEM"/>
    <property type="match status" value="1"/>
</dbReference>
<dbReference type="Pfam" id="PF21090">
    <property type="entry name" value="P-loop_SecA"/>
    <property type="match status" value="1"/>
</dbReference>
<dbReference type="Pfam" id="PF02810">
    <property type="entry name" value="SEC-C"/>
    <property type="match status" value="1"/>
</dbReference>
<dbReference type="Pfam" id="PF07517">
    <property type="entry name" value="SecA_DEAD"/>
    <property type="match status" value="1"/>
</dbReference>
<dbReference type="Pfam" id="PF01043">
    <property type="entry name" value="SecA_PP_bind"/>
    <property type="match status" value="1"/>
</dbReference>
<dbReference type="Pfam" id="PF07516">
    <property type="entry name" value="SecA_SW"/>
    <property type="match status" value="1"/>
</dbReference>
<dbReference type="PRINTS" id="PR00906">
    <property type="entry name" value="SECA"/>
</dbReference>
<dbReference type="SMART" id="SM00957">
    <property type="entry name" value="SecA_DEAD"/>
    <property type="match status" value="1"/>
</dbReference>
<dbReference type="SMART" id="SM00958">
    <property type="entry name" value="SecA_PP_bind"/>
    <property type="match status" value="1"/>
</dbReference>
<dbReference type="SUPFAM" id="SSF81886">
    <property type="entry name" value="Helical scaffold and wing domains of SecA"/>
    <property type="match status" value="1"/>
</dbReference>
<dbReference type="SUPFAM" id="SSF52540">
    <property type="entry name" value="P-loop containing nucleoside triphosphate hydrolases"/>
    <property type="match status" value="2"/>
</dbReference>
<dbReference type="SUPFAM" id="SSF81767">
    <property type="entry name" value="Pre-protein crosslinking domain of SecA"/>
    <property type="match status" value="1"/>
</dbReference>
<dbReference type="PROSITE" id="PS01312">
    <property type="entry name" value="SECA"/>
    <property type="match status" value="1"/>
</dbReference>
<dbReference type="PROSITE" id="PS51196">
    <property type="entry name" value="SECA_MOTOR_DEAD"/>
    <property type="match status" value="1"/>
</dbReference>
<accession>Q8PPA0</accession>
<keyword id="KW-0067">ATP-binding</keyword>
<keyword id="KW-0997">Cell inner membrane</keyword>
<keyword id="KW-1003">Cell membrane</keyword>
<keyword id="KW-0963">Cytoplasm</keyword>
<keyword id="KW-0472">Membrane</keyword>
<keyword id="KW-0479">Metal-binding</keyword>
<keyword id="KW-0547">Nucleotide-binding</keyword>
<keyword id="KW-0653">Protein transport</keyword>
<keyword id="KW-1278">Translocase</keyword>
<keyword id="KW-0811">Translocation</keyword>
<keyword id="KW-0813">Transport</keyword>
<keyword id="KW-0862">Zinc</keyword>
<sequence length="912" mass="102463">MINSLLTRVFGSRNERQLRQLNRLVTQINALEPTIEKLSDAELQAKTPEFKQRLAAGESLDKILPEAFAVCREASRRVLGMRHYDVQLIGGMVLHLGKIAEMRTGEGKTLVATLPVYLNALQGEGVHVVTVNDYLARRDAAQMGKLYNWLGLSVGVVYPGMPHSDKREAYGADITYGTNNEFGFDYLRDNMALSRADRYQRNLHYAIVDEVDSILIDEARTPLIISGPADESPELYIRVNRIVPQLTRQESEEGEGDFWIDEKGKQVHLSEAGMGHAEELLLQAGILENAEDGLYAAQNLSVVHHLNAALRAHAIYQRDVDYIVRDGEVVIVDEFTGRTLSGRRWSDGLHQAVEAKEGVPVQRENQTLASITFQNLFRMYKKLSGMTGTADTEAYEFQSIYGLEVVVIPTNRPTVRKDHPDQVFLNRKGKFNAVLADIEDCAKRGQPVLVGTTSIETSEMLSEHLRKAGVKHEVLNAKQHEREATIVANAGQPGAVTIATNMAGRGTDIVLGGSLESEYHALGEDATEDARFKIKTDWQRRHDAVKAAGGLHIIGTERHESRRIDNQLRGRAGRQGDPGSSRFYLSLEDNLMRIFASDWVQKAMRMMGMKEDDVIEDRLVSRQIEKAQRKVEAHNFDIRKNLLDFDDVNNDQRKVIYAQRDELLDAESVKDNVDGIRGDVIYDLVARFVPPNSVDEQWDLKGLEATLESELGMSLSLTDMVRAQEEIDAEQIAAKVQTAVDAHFAEKEAAIGADTMRALEKHVMLTVLDQGWKEHLAKMDYLRQGIYLRGYAQKQPKQEYKKEAFELFSEMLENVKREVINLLARVRIRSEEEVAELEEQERLQAQARLMASQFQHQDVGGYGADEEVEQMQGGNAPVPVSQVTRDEPKVGRNDPCPCGSGKKYKHCHGQLS</sequence>
<organism>
    <name type="scientific">Xanthomonas axonopodis pv. citri (strain 306)</name>
    <dbReference type="NCBI Taxonomy" id="190486"/>
    <lineage>
        <taxon>Bacteria</taxon>
        <taxon>Pseudomonadati</taxon>
        <taxon>Pseudomonadota</taxon>
        <taxon>Gammaproteobacteria</taxon>
        <taxon>Lysobacterales</taxon>
        <taxon>Lysobacteraceae</taxon>
        <taxon>Xanthomonas</taxon>
    </lineage>
</organism>
<protein>
    <recommendedName>
        <fullName evidence="1">Protein translocase subunit SecA</fullName>
        <ecNumber evidence="1">7.4.2.8</ecNumber>
    </recommendedName>
</protein>
<feature type="chain" id="PRO_0000321042" description="Protein translocase subunit SecA">
    <location>
        <begin position="1"/>
        <end position="912"/>
    </location>
</feature>
<feature type="region of interest" description="Disordered" evidence="2">
    <location>
        <begin position="869"/>
        <end position="912"/>
    </location>
</feature>
<feature type="compositionally biased region" description="Basic residues" evidence="2">
    <location>
        <begin position="902"/>
        <end position="912"/>
    </location>
</feature>
<feature type="binding site" evidence="1">
    <location>
        <position position="87"/>
    </location>
    <ligand>
        <name>ATP</name>
        <dbReference type="ChEBI" id="CHEBI:30616"/>
    </ligand>
</feature>
<feature type="binding site" evidence="1">
    <location>
        <begin position="105"/>
        <end position="109"/>
    </location>
    <ligand>
        <name>ATP</name>
        <dbReference type="ChEBI" id="CHEBI:30616"/>
    </ligand>
</feature>
<feature type="binding site" evidence="1">
    <location>
        <position position="508"/>
    </location>
    <ligand>
        <name>ATP</name>
        <dbReference type="ChEBI" id="CHEBI:30616"/>
    </ligand>
</feature>
<feature type="binding site" evidence="1">
    <location>
        <position position="896"/>
    </location>
    <ligand>
        <name>Zn(2+)</name>
        <dbReference type="ChEBI" id="CHEBI:29105"/>
    </ligand>
</feature>
<feature type="binding site" evidence="1">
    <location>
        <position position="898"/>
    </location>
    <ligand>
        <name>Zn(2+)</name>
        <dbReference type="ChEBI" id="CHEBI:29105"/>
    </ligand>
</feature>
<feature type="binding site" evidence="1">
    <location>
        <position position="907"/>
    </location>
    <ligand>
        <name>Zn(2+)</name>
        <dbReference type="ChEBI" id="CHEBI:29105"/>
    </ligand>
</feature>
<feature type="binding site" evidence="1">
    <location>
        <position position="908"/>
    </location>
    <ligand>
        <name>Zn(2+)</name>
        <dbReference type="ChEBI" id="CHEBI:29105"/>
    </ligand>
</feature>
<evidence type="ECO:0000255" key="1">
    <source>
        <dbReference type="HAMAP-Rule" id="MF_01382"/>
    </source>
</evidence>
<evidence type="ECO:0000256" key="2">
    <source>
        <dbReference type="SAM" id="MobiDB-lite"/>
    </source>
</evidence>
<gene>
    <name evidence="1" type="primary">secA</name>
    <name type="ordered locus">XAC0788</name>
</gene>
<comment type="function">
    <text evidence="1">Part of the Sec protein translocase complex. Interacts with the SecYEG preprotein conducting channel. Has a central role in coupling the hydrolysis of ATP to the transfer of proteins into and across the cell membrane, serving both as a receptor for the preprotein-SecB complex and as an ATP-driven molecular motor driving the stepwise translocation of polypeptide chains across the membrane.</text>
</comment>
<comment type="catalytic activity">
    <reaction evidence="1">
        <text>ATP + H2O + cellular proteinSide 1 = ADP + phosphate + cellular proteinSide 2.</text>
        <dbReference type="EC" id="7.4.2.8"/>
    </reaction>
</comment>
<comment type="cofactor">
    <cofactor evidence="1">
        <name>Zn(2+)</name>
        <dbReference type="ChEBI" id="CHEBI:29105"/>
    </cofactor>
    <text evidence="1">May bind 1 zinc ion per subunit.</text>
</comment>
<comment type="subunit">
    <text evidence="1">Monomer and homodimer. Part of the essential Sec protein translocation apparatus which comprises SecA, SecYEG and auxiliary proteins SecDF-YajC and YidC.</text>
</comment>
<comment type="subcellular location">
    <subcellularLocation>
        <location evidence="1">Cell inner membrane</location>
        <topology evidence="1">Peripheral membrane protein</topology>
        <orientation evidence="1">Cytoplasmic side</orientation>
    </subcellularLocation>
    <subcellularLocation>
        <location evidence="1">Cytoplasm</location>
    </subcellularLocation>
    <text evidence="1">Distribution is 50-50.</text>
</comment>
<comment type="similarity">
    <text evidence="1">Belongs to the SecA family.</text>
</comment>
<reference key="1">
    <citation type="journal article" date="2002" name="Nature">
        <title>Comparison of the genomes of two Xanthomonas pathogens with differing host specificities.</title>
        <authorList>
            <person name="da Silva A.C.R."/>
            <person name="Ferro J.A."/>
            <person name="Reinach F.C."/>
            <person name="Farah C.S."/>
            <person name="Furlan L.R."/>
            <person name="Quaggio R.B."/>
            <person name="Monteiro-Vitorello C.B."/>
            <person name="Van Sluys M.A."/>
            <person name="Almeida N.F. Jr."/>
            <person name="Alves L.M.C."/>
            <person name="do Amaral A.M."/>
            <person name="Bertolini M.C."/>
            <person name="Camargo L.E.A."/>
            <person name="Camarotte G."/>
            <person name="Cannavan F."/>
            <person name="Cardozo J."/>
            <person name="Chambergo F."/>
            <person name="Ciapina L.P."/>
            <person name="Cicarelli R.M.B."/>
            <person name="Coutinho L.L."/>
            <person name="Cursino-Santos J.R."/>
            <person name="El-Dorry H."/>
            <person name="Faria J.B."/>
            <person name="Ferreira A.J.S."/>
            <person name="Ferreira R.C.C."/>
            <person name="Ferro M.I.T."/>
            <person name="Formighieri E.F."/>
            <person name="Franco M.C."/>
            <person name="Greggio C.C."/>
            <person name="Gruber A."/>
            <person name="Katsuyama A.M."/>
            <person name="Kishi L.T."/>
            <person name="Leite R.P."/>
            <person name="Lemos E.G.M."/>
            <person name="Lemos M.V.F."/>
            <person name="Locali E.C."/>
            <person name="Machado M.A."/>
            <person name="Madeira A.M.B.N."/>
            <person name="Martinez-Rossi N.M."/>
            <person name="Martins E.C."/>
            <person name="Meidanis J."/>
            <person name="Menck C.F.M."/>
            <person name="Miyaki C.Y."/>
            <person name="Moon D.H."/>
            <person name="Moreira L.M."/>
            <person name="Novo M.T.M."/>
            <person name="Okura V.K."/>
            <person name="Oliveira M.C."/>
            <person name="Oliveira V.R."/>
            <person name="Pereira H.A."/>
            <person name="Rossi A."/>
            <person name="Sena J.A.D."/>
            <person name="Silva C."/>
            <person name="de Souza R.F."/>
            <person name="Spinola L.A.F."/>
            <person name="Takita M.A."/>
            <person name="Tamura R.E."/>
            <person name="Teixeira E.C."/>
            <person name="Tezza R.I.D."/>
            <person name="Trindade dos Santos M."/>
            <person name="Truffi D."/>
            <person name="Tsai S.M."/>
            <person name="White F.F."/>
            <person name="Setubal J.C."/>
            <person name="Kitajima J.P."/>
        </authorList>
    </citation>
    <scope>NUCLEOTIDE SEQUENCE [LARGE SCALE GENOMIC DNA]</scope>
    <source>
        <strain>306</strain>
    </source>
</reference>
<name>SECA_XANAC</name>
<proteinExistence type="inferred from homology"/>